<protein>
    <recommendedName>
        <fullName evidence="1">Thiazole synthase</fullName>
        <ecNumber evidence="1">2.8.1.10</ecNumber>
    </recommendedName>
</protein>
<reference key="1">
    <citation type="submission" date="2007-11" db="EMBL/GenBank/DDBJ databases">
        <title>Complete sequence of chromosome of Shewanella baltica OS195.</title>
        <authorList>
            <consortium name="US DOE Joint Genome Institute"/>
            <person name="Copeland A."/>
            <person name="Lucas S."/>
            <person name="Lapidus A."/>
            <person name="Barry K."/>
            <person name="Glavina del Rio T."/>
            <person name="Dalin E."/>
            <person name="Tice H."/>
            <person name="Pitluck S."/>
            <person name="Chain P."/>
            <person name="Malfatti S."/>
            <person name="Shin M."/>
            <person name="Vergez L."/>
            <person name="Schmutz J."/>
            <person name="Larimer F."/>
            <person name="Land M."/>
            <person name="Hauser L."/>
            <person name="Kyrpides N."/>
            <person name="Kim E."/>
            <person name="Brettar I."/>
            <person name="Rodrigues J."/>
            <person name="Konstantinidis K."/>
            <person name="Klappenbach J."/>
            <person name="Hofle M."/>
            <person name="Tiedje J."/>
            <person name="Richardson P."/>
        </authorList>
    </citation>
    <scope>NUCLEOTIDE SEQUENCE [LARGE SCALE GENOMIC DNA]</scope>
    <source>
        <strain>OS195</strain>
    </source>
</reference>
<name>THIG_SHEB9</name>
<dbReference type="EC" id="2.8.1.10" evidence="1"/>
<dbReference type="EMBL" id="CP000891">
    <property type="protein sequence ID" value="ABX49603.1"/>
    <property type="molecule type" value="Genomic_DNA"/>
</dbReference>
<dbReference type="RefSeq" id="WP_006081757.1">
    <property type="nucleotide sequence ID" value="NC_009997.1"/>
</dbReference>
<dbReference type="SMR" id="A9L3J3"/>
<dbReference type="KEGG" id="sbn:Sbal195_2435"/>
<dbReference type="HOGENOM" id="CLU_062233_1_0_6"/>
<dbReference type="UniPathway" id="UPA00060"/>
<dbReference type="Proteomes" id="UP000000770">
    <property type="component" value="Chromosome"/>
</dbReference>
<dbReference type="GO" id="GO:0005737">
    <property type="term" value="C:cytoplasm"/>
    <property type="evidence" value="ECO:0007669"/>
    <property type="project" value="UniProtKB-SubCell"/>
</dbReference>
<dbReference type="GO" id="GO:1990107">
    <property type="term" value="F:thiazole synthase activity"/>
    <property type="evidence" value="ECO:0007669"/>
    <property type="project" value="UniProtKB-EC"/>
</dbReference>
<dbReference type="GO" id="GO:0009229">
    <property type="term" value="P:thiamine diphosphate biosynthetic process"/>
    <property type="evidence" value="ECO:0007669"/>
    <property type="project" value="UniProtKB-UniRule"/>
</dbReference>
<dbReference type="CDD" id="cd04728">
    <property type="entry name" value="ThiG"/>
    <property type="match status" value="1"/>
</dbReference>
<dbReference type="FunFam" id="3.20.20.70:FF:000049">
    <property type="entry name" value="Thiazole synthase"/>
    <property type="match status" value="1"/>
</dbReference>
<dbReference type="Gene3D" id="3.20.20.70">
    <property type="entry name" value="Aldolase class I"/>
    <property type="match status" value="1"/>
</dbReference>
<dbReference type="HAMAP" id="MF_00443">
    <property type="entry name" value="ThiG"/>
    <property type="match status" value="1"/>
</dbReference>
<dbReference type="InterPro" id="IPR013785">
    <property type="entry name" value="Aldolase_TIM"/>
</dbReference>
<dbReference type="InterPro" id="IPR033983">
    <property type="entry name" value="Thiazole_synthase_ThiG"/>
</dbReference>
<dbReference type="InterPro" id="IPR008867">
    <property type="entry name" value="ThiG"/>
</dbReference>
<dbReference type="PANTHER" id="PTHR34266">
    <property type="entry name" value="THIAZOLE SYNTHASE"/>
    <property type="match status" value="1"/>
</dbReference>
<dbReference type="PANTHER" id="PTHR34266:SF2">
    <property type="entry name" value="THIAZOLE SYNTHASE"/>
    <property type="match status" value="1"/>
</dbReference>
<dbReference type="Pfam" id="PF05690">
    <property type="entry name" value="ThiG"/>
    <property type="match status" value="1"/>
</dbReference>
<dbReference type="SUPFAM" id="SSF110399">
    <property type="entry name" value="ThiG-like"/>
    <property type="match status" value="1"/>
</dbReference>
<evidence type="ECO:0000255" key="1">
    <source>
        <dbReference type="HAMAP-Rule" id="MF_00443"/>
    </source>
</evidence>
<keyword id="KW-0963">Cytoplasm</keyword>
<keyword id="KW-0704">Schiff base</keyword>
<keyword id="KW-0784">Thiamine biosynthesis</keyword>
<keyword id="KW-0808">Transferase</keyword>
<feature type="chain" id="PRO_1000080877" description="Thiazole synthase">
    <location>
        <begin position="1"/>
        <end position="254"/>
    </location>
</feature>
<feature type="active site" description="Schiff-base intermediate with DXP" evidence="1">
    <location>
        <position position="95"/>
    </location>
</feature>
<feature type="binding site" evidence="1">
    <location>
        <position position="156"/>
    </location>
    <ligand>
        <name>1-deoxy-D-xylulose 5-phosphate</name>
        <dbReference type="ChEBI" id="CHEBI:57792"/>
    </ligand>
</feature>
<feature type="binding site" evidence="1">
    <location>
        <begin position="182"/>
        <end position="183"/>
    </location>
    <ligand>
        <name>1-deoxy-D-xylulose 5-phosphate</name>
        <dbReference type="ChEBI" id="CHEBI:57792"/>
    </ligand>
</feature>
<feature type="binding site" evidence="1">
    <location>
        <begin position="204"/>
        <end position="205"/>
    </location>
    <ligand>
        <name>1-deoxy-D-xylulose 5-phosphate</name>
        <dbReference type="ChEBI" id="CHEBI:57792"/>
    </ligand>
</feature>
<gene>
    <name evidence="1" type="primary">thiG</name>
    <name type="ordered locus">Sbal195_2435</name>
</gene>
<accession>A9L3J3</accession>
<sequence>MLTIADVEFESRLFTGTGKFSNSQVMLEAITASKSQLVTVAMKRIDFKMGLDDLLTPLRQAGVRLLPNTSGARNAKEAVFAAELAREMLGTHWIKLEIHPDPKYLMPDAIETLEAARILCEKGFIVMPYVHADPVLCRRLEEVGCAAVMPLASPIGSNQGLVTESFLKIIIEQARVPVVIDAGIGAPSQAARAMELGADAVLVNTAIASSASPIVMAECFKEAVQCGRRAFEAGLGRVQTGAVHTSPLTGFLNQ</sequence>
<proteinExistence type="inferred from homology"/>
<organism>
    <name type="scientific">Shewanella baltica (strain OS195)</name>
    <dbReference type="NCBI Taxonomy" id="399599"/>
    <lineage>
        <taxon>Bacteria</taxon>
        <taxon>Pseudomonadati</taxon>
        <taxon>Pseudomonadota</taxon>
        <taxon>Gammaproteobacteria</taxon>
        <taxon>Alteromonadales</taxon>
        <taxon>Shewanellaceae</taxon>
        <taxon>Shewanella</taxon>
    </lineage>
</organism>
<comment type="function">
    <text evidence="1">Catalyzes the rearrangement of 1-deoxy-D-xylulose 5-phosphate (DXP) to produce the thiazole phosphate moiety of thiamine. Sulfur is provided by the thiocarboxylate moiety of the carrier protein ThiS. In vitro, sulfur can be provided by H(2)S.</text>
</comment>
<comment type="catalytic activity">
    <reaction evidence="1">
        <text>[ThiS sulfur-carrier protein]-C-terminal-Gly-aminoethanethioate + 2-iminoacetate + 1-deoxy-D-xylulose 5-phosphate = [ThiS sulfur-carrier protein]-C-terminal Gly-Gly + 2-[(2R,5Z)-2-carboxy-4-methylthiazol-5(2H)-ylidene]ethyl phosphate + 2 H2O + H(+)</text>
        <dbReference type="Rhea" id="RHEA:26297"/>
        <dbReference type="Rhea" id="RHEA-COMP:12909"/>
        <dbReference type="Rhea" id="RHEA-COMP:19908"/>
        <dbReference type="ChEBI" id="CHEBI:15377"/>
        <dbReference type="ChEBI" id="CHEBI:15378"/>
        <dbReference type="ChEBI" id="CHEBI:57792"/>
        <dbReference type="ChEBI" id="CHEBI:62899"/>
        <dbReference type="ChEBI" id="CHEBI:77846"/>
        <dbReference type="ChEBI" id="CHEBI:90778"/>
        <dbReference type="ChEBI" id="CHEBI:232372"/>
        <dbReference type="EC" id="2.8.1.10"/>
    </reaction>
</comment>
<comment type="pathway">
    <text evidence="1">Cofactor biosynthesis; thiamine diphosphate biosynthesis.</text>
</comment>
<comment type="subunit">
    <text evidence="1">Homotetramer. Forms heterodimers with either ThiH or ThiS.</text>
</comment>
<comment type="subcellular location">
    <subcellularLocation>
        <location evidence="1">Cytoplasm</location>
    </subcellularLocation>
</comment>
<comment type="similarity">
    <text evidence="1">Belongs to the ThiG family.</text>
</comment>